<feature type="chain" id="PRO_0000166554" description="GTP pyrophosphokinase">
    <location>
        <begin position="1"/>
        <end position="744"/>
    </location>
</feature>
<feature type="domain" description="HD" evidence="3">
    <location>
        <begin position="55"/>
        <end position="160"/>
    </location>
</feature>
<feature type="domain" description="TGS" evidence="4">
    <location>
        <begin position="404"/>
        <end position="465"/>
    </location>
</feature>
<feature type="domain" description="ACT" evidence="2">
    <location>
        <begin position="668"/>
        <end position="743"/>
    </location>
</feature>
<protein>
    <recommendedName>
        <fullName>GTP pyrophosphokinase</fullName>
        <ecNumber>2.7.6.5</ecNumber>
    </recommendedName>
    <alternativeName>
        <fullName>(p)ppGpp synthase</fullName>
    </alternativeName>
    <alternativeName>
        <fullName>ATP:GTP 3'-pyrophosphotransferase</fullName>
    </alternativeName>
    <alternativeName>
        <fullName>ppGpp synthase I</fullName>
    </alternativeName>
</protein>
<organism>
    <name type="scientific">Shigella flexneri</name>
    <dbReference type="NCBI Taxonomy" id="623"/>
    <lineage>
        <taxon>Bacteria</taxon>
        <taxon>Pseudomonadati</taxon>
        <taxon>Pseudomonadota</taxon>
        <taxon>Gammaproteobacteria</taxon>
        <taxon>Enterobacterales</taxon>
        <taxon>Enterobacteriaceae</taxon>
        <taxon>Shigella</taxon>
    </lineage>
</organism>
<gene>
    <name type="primary">relA</name>
    <name type="ordered locus">SF2797</name>
    <name type="ordered locus">S2991</name>
</gene>
<evidence type="ECO:0000250" key="1"/>
<evidence type="ECO:0000255" key="2">
    <source>
        <dbReference type="PROSITE-ProRule" id="PRU01007"/>
    </source>
</evidence>
<evidence type="ECO:0000255" key="3">
    <source>
        <dbReference type="PROSITE-ProRule" id="PRU01175"/>
    </source>
</evidence>
<evidence type="ECO:0000255" key="4">
    <source>
        <dbReference type="PROSITE-ProRule" id="PRU01228"/>
    </source>
</evidence>
<evidence type="ECO:0000305" key="5"/>
<keyword id="KW-0067">ATP-binding</keyword>
<keyword id="KW-0342">GTP-binding</keyword>
<keyword id="KW-0418">Kinase</keyword>
<keyword id="KW-0547">Nucleotide-binding</keyword>
<keyword id="KW-1185">Reference proteome</keyword>
<keyword id="KW-0808">Transferase</keyword>
<dbReference type="EC" id="2.7.6.5"/>
<dbReference type="EMBL" id="AE005674">
    <property type="protein sequence ID" value="AAN44285.1"/>
    <property type="molecule type" value="Genomic_DNA"/>
</dbReference>
<dbReference type="EMBL" id="AE014073">
    <property type="protein sequence ID" value="AAP18110.1"/>
    <property type="molecule type" value="Genomic_DNA"/>
</dbReference>
<dbReference type="RefSeq" id="NP_708578.1">
    <property type="nucleotide sequence ID" value="NC_004337.2"/>
</dbReference>
<dbReference type="RefSeq" id="WP_000226815.1">
    <property type="nucleotide sequence ID" value="NZ_WPGW01000063.1"/>
</dbReference>
<dbReference type="SMR" id="P0AG23"/>
<dbReference type="STRING" id="198214.SF2797"/>
<dbReference type="PaxDb" id="198214-SF2797"/>
<dbReference type="GeneID" id="1027604"/>
<dbReference type="GeneID" id="93779214"/>
<dbReference type="KEGG" id="sfl:SF2797"/>
<dbReference type="KEGG" id="sfx:S2991"/>
<dbReference type="PATRIC" id="fig|198214.7.peg.3330"/>
<dbReference type="HOGENOM" id="CLU_012300_3_0_6"/>
<dbReference type="UniPathway" id="UPA00908">
    <property type="reaction ID" value="UER00884"/>
</dbReference>
<dbReference type="Proteomes" id="UP000001006">
    <property type="component" value="Chromosome"/>
</dbReference>
<dbReference type="Proteomes" id="UP000002673">
    <property type="component" value="Chromosome"/>
</dbReference>
<dbReference type="GO" id="GO:0005886">
    <property type="term" value="C:plasma membrane"/>
    <property type="evidence" value="ECO:0007669"/>
    <property type="project" value="TreeGrafter"/>
</dbReference>
<dbReference type="GO" id="GO:0005524">
    <property type="term" value="F:ATP binding"/>
    <property type="evidence" value="ECO:0007669"/>
    <property type="project" value="UniProtKB-KW"/>
</dbReference>
<dbReference type="GO" id="GO:0005525">
    <property type="term" value="F:GTP binding"/>
    <property type="evidence" value="ECO:0007669"/>
    <property type="project" value="UniProtKB-KW"/>
</dbReference>
<dbReference type="GO" id="GO:0008728">
    <property type="term" value="F:GTP diphosphokinase activity"/>
    <property type="evidence" value="ECO:0007669"/>
    <property type="project" value="UniProtKB-EC"/>
</dbReference>
<dbReference type="GO" id="GO:0008893">
    <property type="term" value="F:guanosine-3',5'-bis(diphosphate) 3'-diphosphatase activity"/>
    <property type="evidence" value="ECO:0007669"/>
    <property type="project" value="TreeGrafter"/>
</dbReference>
<dbReference type="GO" id="GO:0016301">
    <property type="term" value="F:kinase activity"/>
    <property type="evidence" value="ECO:0007669"/>
    <property type="project" value="UniProtKB-KW"/>
</dbReference>
<dbReference type="GO" id="GO:0015970">
    <property type="term" value="P:guanosine tetraphosphate biosynthetic process"/>
    <property type="evidence" value="ECO:0007669"/>
    <property type="project" value="UniProtKB-UniPathway"/>
</dbReference>
<dbReference type="GO" id="GO:0042594">
    <property type="term" value="P:response to starvation"/>
    <property type="evidence" value="ECO:0007669"/>
    <property type="project" value="TreeGrafter"/>
</dbReference>
<dbReference type="CDD" id="cd04876">
    <property type="entry name" value="ACT_RelA-SpoT"/>
    <property type="match status" value="1"/>
</dbReference>
<dbReference type="CDD" id="cd05399">
    <property type="entry name" value="NT_Rel-Spo_like"/>
    <property type="match status" value="1"/>
</dbReference>
<dbReference type="CDD" id="cd01668">
    <property type="entry name" value="TGS_RSH"/>
    <property type="match status" value="1"/>
</dbReference>
<dbReference type="FunFam" id="1.10.3210.10:FF:000007">
    <property type="entry name" value="GTP pyrophosphokinase"/>
    <property type="match status" value="1"/>
</dbReference>
<dbReference type="FunFam" id="3.10.20.30:FF:000002">
    <property type="entry name" value="GTP pyrophosphokinase (RelA/SpoT)"/>
    <property type="match status" value="1"/>
</dbReference>
<dbReference type="FunFam" id="3.30.460.10:FF:000001">
    <property type="entry name" value="GTP pyrophosphokinase RelA"/>
    <property type="match status" value="1"/>
</dbReference>
<dbReference type="FunFam" id="3.30.70.260:FF:000010">
    <property type="entry name" value="GTP pyrophosphokinase RelA"/>
    <property type="match status" value="1"/>
</dbReference>
<dbReference type="Gene3D" id="3.10.20.30">
    <property type="match status" value="1"/>
</dbReference>
<dbReference type="Gene3D" id="3.30.70.260">
    <property type="match status" value="1"/>
</dbReference>
<dbReference type="Gene3D" id="3.30.460.10">
    <property type="entry name" value="Beta Polymerase, domain 2"/>
    <property type="match status" value="1"/>
</dbReference>
<dbReference type="Gene3D" id="1.10.3210.10">
    <property type="entry name" value="Hypothetical protein af1432"/>
    <property type="match status" value="1"/>
</dbReference>
<dbReference type="InterPro" id="IPR045865">
    <property type="entry name" value="ACT-like_dom_sf"/>
</dbReference>
<dbReference type="InterPro" id="IPR002912">
    <property type="entry name" value="ACT_dom"/>
</dbReference>
<dbReference type="InterPro" id="IPR012675">
    <property type="entry name" value="Beta-grasp_dom_sf"/>
</dbReference>
<dbReference type="InterPro" id="IPR006674">
    <property type="entry name" value="HD_domain"/>
</dbReference>
<dbReference type="InterPro" id="IPR043519">
    <property type="entry name" value="NT_sf"/>
</dbReference>
<dbReference type="InterPro" id="IPR004811">
    <property type="entry name" value="RelA/Spo_fam"/>
</dbReference>
<dbReference type="InterPro" id="IPR045600">
    <property type="entry name" value="RelA/SpoT_AH_RIS"/>
</dbReference>
<dbReference type="InterPro" id="IPR007685">
    <property type="entry name" value="RelA_SpoT"/>
</dbReference>
<dbReference type="InterPro" id="IPR004095">
    <property type="entry name" value="TGS"/>
</dbReference>
<dbReference type="InterPro" id="IPR012676">
    <property type="entry name" value="TGS-like"/>
</dbReference>
<dbReference type="InterPro" id="IPR033655">
    <property type="entry name" value="TGS_RelA/SpoT"/>
</dbReference>
<dbReference type="NCBIfam" id="NF008124">
    <property type="entry name" value="PRK10872.1"/>
    <property type="match status" value="1"/>
</dbReference>
<dbReference type="NCBIfam" id="TIGR00691">
    <property type="entry name" value="spoT_relA"/>
    <property type="match status" value="1"/>
</dbReference>
<dbReference type="PANTHER" id="PTHR21262:SF31">
    <property type="entry name" value="GTP PYROPHOSPHOKINASE"/>
    <property type="match status" value="1"/>
</dbReference>
<dbReference type="PANTHER" id="PTHR21262">
    <property type="entry name" value="GUANOSINE-3',5'-BIS DIPHOSPHATE 3'-PYROPHOSPHOHYDROLASE"/>
    <property type="match status" value="1"/>
</dbReference>
<dbReference type="Pfam" id="PF13291">
    <property type="entry name" value="ACT_4"/>
    <property type="match status" value="1"/>
</dbReference>
<dbReference type="Pfam" id="PF13328">
    <property type="entry name" value="HD_4"/>
    <property type="match status" value="1"/>
</dbReference>
<dbReference type="Pfam" id="PF19296">
    <property type="entry name" value="RelA_AH_RIS"/>
    <property type="match status" value="1"/>
</dbReference>
<dbReference type="Pfam" id="PF04607">
    <property type="entry name" value="RelA_SpoT"/>
    <property type="match status" value="1"/>
</dbReference>
<dbReference type="Pfam" id="PF02824">
    <property type="entry name" value="TGS"/>
    <property type="match status" value="1"/>
</dbReference>
<dbReference type="SMART" id="SM00954">
    <property type="entry name" value="RelA_SpoT"/>
    <property type="match status" value="1"/>
</dbReference>
<dbReference type="SUPFAM" id="SSF55021">
    <property type="entry name" value="ACT-like"/>
    <property type="match status" value="1"/>
</dbReference>
<dbReference type="SUPFAM" id="SSF109604">
    <property type="entry name" value="HD-domain/PDEase-like"/>
    <property type="match status" value="1"/>
</dbReference>
<dbReference type="SUPFAM" id="SSF81301">
    <property type="entry name" value="Nucleotidyltransferase"/>
    <property type="match status" value="1"/>
</dbReference>
<dbReference type="SUPFAM" id="SSF81271">
    <property type="entry name" value="TGS-like"/>
    <property type="match status" value="1"/>
</dbReference>
<dbReference type="PROSITE" id="PS51671">
    <property type="entry name" value="ACT"/>
    <property type="match status" value="1"/>
</dbReference>
<dbReference type="PROSITE" id="PS51831">
    <property type="entry name" value="HD"/>
    <property type="match status" value="1"/>
</dbReference>
<dbReference type="PROSITE" id="PS51880">
    <property type="entry name" value="TGS"/>
    <property type="match status" value="1"/>
</dbReference>
<proteinExistence type="inferred from homology"/>
<accession>P0AG23</accession>
<accession>P11585</accession>
<comment type="function">
    <text evidence="1">In eubacteria ppGpp (guanosine 3'-diphosphate 5'-diphosphate) is a mediator of the stringent response that coordinates a variety of cellular activities in response to changes in nutritional abundance. This enzyme catalyzes the formation of pppGpp which is then hydrolyzed to form ppGpp (By similarity).</text>
</comment>
<comment type="catalytic activity">
    <reaction>
        <text>GTP + ATP = guanosine 3'-diphosphate 5'-triphosphate + AMP</text>
        <dbReference type="Rhea" id="RHEA:22088"/>
        <dbReference type="ChEBI" id="CHEBI:30616"/>
        <dbReference type="ChEBI" id="CHEBI:37565"/>
        <dbReference type="ChEBI" id="CHEBI:142410"/>
        <dbReference type="ChEBI" id="CHEBI:456215"/>
        <dbReference type="EC" id="2.7.6.5"/>
    </reaction>
</comment>
<comment type="pathway">
    <text>Purine metabolism; ppGpp biosynthesis; ppGpp from GTP: step 1/2.</text>
</comment>
<comment type="similarity">
    <text evidence="5">Belongs to the RelA/SpoT family.</text>
</comment>
<reference key="1">
    <citation type="journal article" date="2002" name="Nucleic Acids Res.">
        <title>Genome sequence of Shigella flexneri 2a: insights into pathogenicity through comparison with genomes of Escherichia coli K12 and O157.</title>
        <authorList>
            <person name="Jin Q."/>
            <person name="Yuan Z."/>
            <person name="Xu J."/>
            <person name="Wang Y."/>
            <person name="Shen Y."/>
            <person name="Lu W."/>
            <person name="Wang J."/>
            <person name="Liu H."/>
            <person name="Yang J."/>
            <person name="Yang F."/>
            <person name="Zhang X."/>
            <person name="Zhang J."/>
            <person name="Yang G."/>
            <person name="Wu H."/>
            <person name="Qu D."/>
            <person name="Dong J."/>
            <person name="Sun L."/>
            <person name="Xue Y."/>
            <person name="Zhao A."/>
            <person name="Gao Y."/>
            <person name="Zhu J."/>
            <person name="Kan B."/>
            <person name="Ding K."/>
            <person name="Chen S."/>
            <person name="Cheng H."/>
            <person name="Yao Z."/>
            <person name="He B."/>
            <person name="Chen R."/>
            <person name="Ma D."/>
            <person name="Qiang B."/>
            <person name="Wen Y."/>
            <person name="Hou Y."/>
            <person name="Yu J."/>
        </authorList>
    </citation>
    <scope>NUCLEOTIDE SEQUENCE [LARGE SCALE GENOMIC DNA]</scope>
    <source>
        <strain>301 / Serotype 2a</strain>
    </source>
</reference>
<reference key="2">
    <citation type="journal article" date="2003" name="Infect. Immun.">
        <title>Complete genome sequence and comparative genomics of Shigella flexneri serotype 2a strain 2457T.</title>
        <authorList>
            <person name="Wei J."/>
            <person name="Goldberg M.B."/>
            <person name="Burland V."/>
            <person name="Venkatesan M.M."/>
            <person name="Deng W."/>
            <person name="Fournier G."/>
            <person name="Mayhew G.F."/>
            <person name="Plunkett G. III"/>
            <person name="Rose D.J."/>
            <person name="Darling A."/>
            <person name="Mau B."/>
            <person name="Perna N.T."/>
            <person name="Payne S.M."/>
            <person name="Runyen-Janecky L.J."/>
            <person name="Zhou S."/>
            <person name="Schwartz D.C."/>
            <person name="Blattner F.R."/>
        </authorList>
    </citation>
    <scope>NUCLEOTIDE SEQUENCE [LARGE SCALE GENOMIC DNA]</scope>
    <source>
        <strain>ATCC 700930 / 2457T / Serotype 2a</strain>
    </source>
</reference>
<name>RELA_SHIFL</name>
<sequence length="744" mass="83876">MVAVRSAHINKAGEFDPEKWIASLGITSQKSCECLAETWAYCLQQTQGHPDASLLLWRGVEMVEILSTLSMDIDTLRAALLFPLADANVVSEDVLRESVGKSVVNLIHGVRDMAAIRQLKATHTDSVSSEQVDNVRRMLLAMVDDFRCVVIKLAERIAHLREVKDAPEDERVLAAKECTNIYAPLANRLGIGQLKWELEDYCFRYLHPTEYKRIAKLLHERRLDREHYIEEFVGHLRAEMKAEGVKAEVYGRPKHIYSIWRKMQKKNLAFDELFDVRAVRIVAERLQDCYAALGIVHTHYRHLPDEFDDYVANPKPNGYQSIHTVVLGPGGKTVEIQIRTKQMHEDAELGVAAHWKYKEGAAAGGARSGHEDRIAWLRKLIAWQEEMADSGEMLDEVRSQVFDDRVYVFTPKGDVVDLPAGSTPLDFAYHIHSDVGHRCIGAKIGGRIVPFTYQLQMGDQIEIITQKQPNPSRDWLNPNLGYVTTSRGRSKIHAWFRKQDRDKNILAGRQILDDELEHLGISLKEAEKHLLPRYNFNDVDELLAAIGGGDIRLNQMVNFLQSQFNKPSAEEQDAAALKQLQQKSYTPQNRSKDNGRVVVEGVGNLMHHIARCCQPIPGDEIVGFITQGRGISVHRADCEQLAELRSHAPERIVDAVWGESYSAGYSLVVRVVANDRSGLLRDITTILANEKVNVLGVASRSDTKQQLATIDMTIEIYNLQVLGRVLGKLNQVPDVIDARRLHGS</sequence>